<feature type="transit peptide" description="Chloroplast" evidence="3">
    <location>
        <begin position="1"/>
        <end position="65"/>
    </location>
</feature>
<feature type="chain" id="PRO_0000322574" description="Ferredoxin--NADP reductase, root isozyme 1, chloroplastic">
    <location>
        <begin position="66"/>
        <end position="378"/>
    </location>
</feature>
<feature type="domain" description="FAD-binding FR-type" evidence="4">
    <location>
        <begin position="93"/>
        <end position="221"/>
    </location>
</feature>
<feature type="coiled-coil region" evidence="3">
    <location>
        <begin position="349"/>
        <end position="373"/>
    </location>
</feature>
<feature type="binding site" evidence="1">
    <location>
        <begin position="231"/>
        <end position="249"/>
    </location>
    <ligand>
        <name>NADP(+)</name>
        <dbReference type="ChEBI" id="CHEBI:58349"/>
    </ligand>
</feature>
<feature type="modified residue" description="Phosphoserine" evidence="2">
    <location>
        <position position="197"/>
    </location>
</feature>
<feature type="modified residue" description="Phosphothreonine" evidence="2">
    <location>
        <position position="229"/>
    </location>
</feature>
<feature type="disulfide bond" evidence="1">
    <location>
        <begin position="196"/>
        <end position="201"/>
    </location>
</feature>
<feature type="sequence conflict" description="In Ref. 4; AAM64825." evidence="6" ref="4">
    <original>Q</original>
    <variation>K</variation>
    <location>
        <position position="132"/>
    </location>
</feature>
<feature type="sequence conflict" description="In Ref. 3; AAM96978." evidence="6" ref="3">
    <original>D</original>
    <variation>N</variation>
    <location>
        <position position="321"/>
    </location>
</feature>
<gene>
    <name type="primary">RFNR1</name>
    <name type="synonym">PETH3</name>
    <name type="ordered locus">At4g05390</name>
    <name type="ORF">C6L9.70</name>
</gene>
<protein>
    <recommendedName>
        <fullName>Ferredoxin--NADP reductase, root isozyme 1, chloroplastic</fullName>
        <ecNumber>1.18.1.2</ecNumber>
    </recommendedName>
    <alternativeName>
        <fullName>Root FNR 1</fullName>
        <shortName>AtRFNR1</shortName>
    </alternativeName>
</protein>
<proteinExistence type="evidence at transcript level"/>
<evidence type="ECO:0000250" key="1"/>
<evidence type="ECO:0000250" key="2">
    <source>
        <dbReference type="UniProtKB" id="Q9FKW6"/>
    </source>
</evidence>
<evidence type="ECO:0000255" key="3"/>
<evidence type="ECO:0000255" key="4">
    <source>
        <dbReference type="PROSITE-ProRule" id="PRU00716"/>
    </source>
</evidence>
<evidence type="ECO:0000269" key="5">
    <source ref="5"/>
</evidence>
<evidence type="ECO:0000305" key="6"/>
<dbReference type="EC" id="1.18.1.2"/>
<dbReference type="EMBL" id="AL161503">
    <property type="protein sequence ID" value="CAB81081.1"/>
    <property type="status" value="ALT_SEQ"/>
    <property type="molecule type" value="Genomic_DNA"/>
</dbReference>
<dbReference type="EMBL" id="CP002687">
    <property type="protein sequence ID" value="AEE82512.1"/>
    <property type="molecule type" value="Genomic_DNA"/>
</dbReference>
<dbReference type="EMBL" id="AY072339">
    <property type="protein sequence ID" value="AAL61946.1"/>
    <property type="molecule type" value="mRNA"/>
</dbReference>
<dbReference type="EMBL" id="AY114609">
    <property type="protein sequence ID" value="AAM47928.1"/>
    <property type="molecule type" value="mRNA"/>
</dbReference>
<dbReference type="EMBL" id="AY136312">
    <property type="protein sequence ID" value="AAM96978.1"/>
    <property type="molecule type" value="mRNA"/>
</dbReference>
<dbReference type="EMBL" id="AY087271">
    <property type="protein sequence ID" value="AAM64825.1"/>
    <property type="molecule type" value="mRNA"/>
</dbReference>
<dbReference type="PIR" id="G85067">
    <property type="entry name" value="G85067"/>
</dbReference>
<dbReference type="RefSeq" id="NP_567293.1">
    <molecule id="Q9M0V6-1"/>
    <property type="nucleotide sequence ID" value="NM_116778.4"/>
</dbReference>
<dbReference type="SMR" id="Q9M0V6"/>
<dbReference type="BioGRID" id="11198">
    <property type="interactions" value="3"/>
</dbReference>
<dbReference type="FunCoup" id="Q9M0V6">
    <property type="interactions" value="112"/>
</dbReference>
<dbReference type="STRING" id="3702.Q9M0V6"/>
<dbReference type="MetOSite" id="Q9M0V6"/>
<dbReference type="PaxDb" id="3702-AT4G05390.1"/>
<dbReference type="ProteomicsDB" id="230631">
    <molecule id="Q9M0V6-1"/>
</dbReference>
<dbReference type="EnsemblPlants" id="AT4G05390.1">
    <molecule id="Q9M0V6-1"/>
    <property type="protein sequence ID" value="AT4G05390.1"/>
    <property type="gene ID" value="AT4G05390"/>
</dbReference>
<dbReference type="GeneID" id="825887"/>
<dbReference type="Gramene" id="AT4G05390.1">
    <molecule id="Q9M0V6-1"/>
    <property type="protein sequence ID" value="AT4G05390.1"/>
    <property type="gene ID" value="AT4G05390"/>
</dbReference>
<dbReference type="KEGG" id="ath:AT4G05390"/>
<dbReference type="Araport" id="AT4G05390"/>
<dbReference type="TAIR" id="AT4G05390">
    <property type="gene designation" value="RFNR1"/>
</dbReference>
<dbReference type="eggNOG" id="KOG1158">
    <property type="taxonomic scope" value="Eukaryota"/>
</dbReference>
<dbReference type="InParanoid" id="Q9M0V6"/>
<dbReference type="PhylomeDB" id="Q9M0V6"/>
<dbReference type="BioCyc" id="ARA:AT4G05390-MONOMER"/>
<dbReference type="PRO" id="PR:Q9M0V6"/>
<dbReference type="Proteomes" id="UP000006548">
    <property type="component" value="Chromosome 4"/>
</dbReference>
<dbReference type="ExpressionAtlas" id="Q9M0V6">
    <property type="expression patterns" value="baseline and differential"/>
</dbReference>
<dbReference type="GO" id="GO:0009507">
    <property type="term" value="C:chloroplast"/>
    <property type="evidence" value="ECO:0007005"/>
    <property type="project" value="TAIR"/>
</dbReference>
<dbReference type="GO" id="GO:0005507">
    <property type="term" value="F:copper ion binding"/>
    <property type="evidence" value="ECO:0007005"/>
    <property type="project" value="TAIR"/>
</dbReference>
<dbReference type="GO" id="GO:0004324">
    <property type="term" value="F:ferredoxin-NADP+ reductase activity"/>
    <property type="evidence" value="ECO:0007669"/>
    <property type="project" value="UniProtKB-EC"/>
</dbReference>
<dbReference type="GO" id="GO:0015979">
    <property type="term" value="P:photosynthesis"/>
    <property type="evidence" value="ECO:0007669"/>
    <property type="project" value="UniProtKB-KW"/>
</dbReference>
<dbReference type="CDD" id="cd06208">
    <property type="entry name" value="CYPOR_like_FNR"/>
    <property type="match status" value="1"/>
</dbReference>
<dbReference type="FunFam" id="2.40.30.10:FF:000048">
    <property type="entry name" value="Ferredoxin--NADP reductase, chloroplastic"/>
    <property type="match status" value="1"/>
</dbReference>
<dbReference type="FunFam" id="3.40.50.80:FF:000008">
    <property type="entry name" value="Ferredoxin--NADP reductase, chloroplastic"/>
    <property type="match status" value="1"/>
</dbReference>
<dbReference type="Gene3D" id="3.40.50.80">
    <property type="entry name" value="Nucleotide-binding domain of ferredoxin-NADP reductase (FNR) module"/>
    <property type="match status" value="1"/>
</dbReference>
<dbReference type="Gene3D" id="2.40.30.10">
    <property type="entry name" value="Translation factors"/>
    <property type="match status" value="1"/>
</dbReference>
<dbReference type="InterPro" id="IPR017927">
    <property type="entry name" value="FAD-bd_FR_type"/>
</dbReference>
<dbReference type="InterPro" id="IPR001709">
    <property type="entry name" value="Flavoprot_Pyr_Nucl_cyt_Rdtase"/>
</dbReference>
<dbReference type="InterPro" id="IPR015701">
    <property type="entry name" value="FNR"/>
</dbReference>
<dbReference type="InterPro" id="IPR039261">
    <property type="entry name" value="FNR_nucleotide-bd"/>
</dbReference>
<dbReference type="InterPro" id="IPR035442">
    <property type="entry name" value="FNR_plant_Cyanobacteria"/>
</dbReference>
<dbReference type="InterPro" id="IPR001433">
    <property type="entry name" value="OxRdtase_FAD/NAD-bd"/>
</dbReference>
<dbReference type="InterPro" id="IPR017938">
    <property type="entry name" value="Riboflavin_synthase-like_b-brl"/>
</dbReference>
<dbReference type="PANTHER" id="PTHR43314">
    <property type="match status" value="1"/>
</dbReference>
<dbReference type="Pfam" id="PF00175">
    <property type="entry name" value="NAD_binding_1"/>
    <property type="match status" value="1"/>
</dbReference>
<dbReference type="PIRSF" id="PIRSF501178">
    <property type="entry name" value="FNR-PetH"/>
    <property type="match status" value="1"/>
</dbReference>
<dbReference type="PIRSF" id="PIRSF000361">
    <property type="entry name" value="Frd-NADP+_RD"/>
    <property type="match status" value="1"/>
</dbReference>
<dbReference type="PRINTS" id="PR00371">
    <property type="entry name" value="FPNCR"/>
</dbReference>
<dbReference type="SUPFAM" id="SSF52343">
    <property type="entry name" value="Ferredoxin reductase-like, C-terminal NADP-linked domain"/>
    <property type="match status" value="1"/>
</dbReference>
<dbReference type="SUPFAM" id="SSF63380">
    <property type="entry name" value="Riboflavin synthase domain-like"/>
    <property type="match status" value="1"/>
</dbReference>
<dbReference type="PROSITE" id="PS51384">
    <property type="entry name" value="FAD_FR"/>
    <property type="match status" value="1"/>
</dbReference>
<keyword id="KW-0025">Alternative splicing</keyword>
<keyword id="KW-0150">Chloroplast</keyword>
<keyword id="KW-0175">Coiled coil</keyword>
<keyword id="KW-1015">Disulfide bond</keyword>
<keyword id="KW-0249">Electron transport</keyword>
<keyword id="KW-0274">FAD</keyword>
<keyword id="KW-0285">Flavoprotein</keyword>
<keyword id="KW-0521">NADP</keyword>
<keyword id="KW-0560">Oxidoreductase</keyword>
<keyword id="KW-0597">Phosphoprotein</keyword>
<keyword id="KW-0602">Photosynthesis</keyword>
<keyword id="KW-0934">Plastid</keyword>
<keyword id="KW-1185">Reference proteome</keyword>
<keyword id="KW-0809">Transit peptide</keyword>
<keyword id="KW-0813">Transport</keyword>
<sequence>MALSTTPSQMSVALPTRIDGSSRSMIKVQSISFTDKSWGPPLLRLDSKSRSLGVKKRSTICMSLQQSSKSKVLVTPLELEDPKETPLNLFRPKEPYTATIVSVERIVGPQAPGETCHIVIDHDGNVPYWEGQSYGVIPPGENPKKPGAPHNVRLYSIASTRYGDSFDGKTASLCVRRAIYYDPETGKEDPSKAGVCSNFLCNAKPGDKVKITGPSGKVMLLPEDDPKATHIMIATGTGVAPYRGYLRRMFMENVPNFKFDGLAWLFLGVANSDSLLYDEEFAGYRKDYPENFRYDKALSREEKNKKGGKMYVQDKIEEYSDEIFKLLDNGAHIYFCGLKGMMPGIQDTLKRVAEERGESWEQKLTQLRKNKQWHVEVY</sequence>
<organism>
    <name type="scientific">Arabidopsis thaliana</name>
    <name type="common">Mouse-ear cress</name>
    <dbReference type="NCBI Taxonomy" id="3702"/>
    <lineage>
        <taxon>Eukaryota</taxon>
        <taxon>Viridiplantae</taxon>
        <taxon>Streptophyta</taxon>
        <taxon>Embryophyta</taxon>
        <taxon>Tracheophyta</taxon>
        <taxon>Spermatophyta</taxon>
        <taxon>Magnoliopsida</taxon>
        <taxon>eudicotyledons</taxon>
        <taxon>Gunneridae</taxon>
        <taxon>Pentapetalae</taxon>
        <taxon>rosids</taxon>
        <taxon>malvids</taxon>
        <taxon>Brassicales</taxon>
        <taxon>Brassicaceae</taxon>
        <taxon>Camelineae</taxon>
        <taxon>Arabidopsis</taxon>
    </lineage>
</organism>
<reference key="1">
    <citation type="journal article" date="1999" name="Nature">
        <title>Sequence and analysis of chromosome 4 of the plant Arabidopsis thaliana.</title>
        <authorList>
            <person name="Mayer K.F.X."/>
            <person name="Schueller C."/>
            <person name="Wambutt R."/>
            <person name="Murphy G."/>
            <person name="Volckaert G."/>
            <person name="Pohl T."/>
            <person name="Duesterhoeft A."/>
            <person name="Stiekema W."/>
            <person name="Entian K.-D."/>
            <person name="Terryn N."/>
            <person name="Harris B."/>
            <person name="Ansorge W."/>
            <person name="Brandt P."/>
            <person name="Grivell L.A."/>
            <person name="Rieger M."/>
            <person name="Weichselgartner M."/>
            <person name="de Simone V."/>
            <person name="Obermaier B."/>
            <person name="Mache R."/>
            <person name="Mueller M."/>
            <person name="Kreis M."/>
            <person name="Delseny M."/>
            <person name="Puigdomenech P."/>
            <person name="Watson M."/>
            <person name="Schmidtheini T."/>
            <person name="Reichert B."/>
            <person name="Portetelle D."/>
            <person name="Perez-Alonso M."/>
            <person name="Boutry M."/>
            <person name="Bancroft I."/>
            <person name="Vos P."/>
            <person name="Hoheisel J."/>
            <person name="Zimmermann W."/>
            <person name="Wedler H."/>
            <person name="Ridley P."/>
            <person name="Langham S.-A."/>
            <person name="McCullagh B."/>
            <person name="Bilham L."/>
            <person name="Robben J."/>
            <person name="van der Schueren J."/>
            <person name="Grymonprez B."/>
            <person name="Chuang Y.-J."/>
            <person name="Vandenbussche F."/>
            <person name="Braeken M."/>
            <person name="Weltjens I."/>
            <person name="Voet M."/>
            <person name="Bastiaens I."/>
            <person name="Aert R."/>
            <person name="Defoor E."/>
            <person name="Weitzenegger T."/>
            <person name="Bothe G."/>
            <person name="Ramsperger U."/>
            <person name="Hilbert H."/>
            <person name="Braun M."/>
            <person name="Holzer E."/>
            <person name="Brandt A."/>
            <person name="Peters S."/>
            <person name="van Staveren M."/>
            <person name="Dirkse W."/>
            <person name="Mooijman P."/>
            <person name="Klein Lankhorst R."/>
            <person name="Rose M."/>
            <person name="Hauf J."/>
            <person name="Koetter P."/>
            <person name="Berneiser S."/>
            <person name="Hempel S."/>
            <person name="Feldpausch M."/>
            <person name="Lamberth S."/>
            <person name="Van den Daele H."/>
            <person name="De Keyser A."/>
            <person name="Buysshaert C."/>
            <person name="Gielen J."/>
            <person name="Villarroel R."/>
            <person name="De Clercq R."/>
            <person name="van Montagu M."/>
            <person name="Rogers J."/>
            <person name="Cronin A."/>
            <person name="Quail M.A."/>
            <person name="Bray-Allen S."/>
            <person name="Clark L."/>
            <person name="Doggett J."/>
            <person name="Hall S."/>
            <person name="Kay M."/>
            <person name="Lennard N."/>
            <person name="McLay K."/>
            <person name="Mayes R."/>
            <person name="Pettett A."/>
            <person name="Rajandream M.A."/>
            <person name="Lyne M."/>
            <person name="Benes V."/>
            <person name="Rechmann S."/>
            <person name="Borkova D."/>
            <person name="Bloecker H."/>
            <person name="Scharfe M."/>
            <person name="Grimm M."/>
            <person name="Loehnert T.-H."/>
            <person name="Dose S."/>
            <person name="de Haan M."/>
            <person name="Maarse A.C."/>
            <person name="Schaefer M."/>
            <person name="Mueller-Auer S."/>
            <person name="Gabel C."/>
            <person name="Fuchs M."/>
            <person name="Fartmann B."/>
            <person name="Granderath K."/>
            <person name="Dauner D."/>
            <person name="Herzl A."/>
            <person name="Neumann S."/>
            <person name="Argiriou A."/>
            <person name="Vitale D."/>
            <person name="Liguori R."/>
            <person name="Piravandi E."/>
            <person name="Massenet O."/>
            <person name="Quigley F."/>
            <person name="Clabauld G."/>
            <person name="Muendlein A."/>
            <person name="Felber R."/>
            <person name="Schnabl S."/>
            <person name="Hiller R."/>
            <person name="Schmidt W."/>
            <person name="Lecharny A."/>
            <person name="Aubourg S."/>
            <person name="Chefdor F."/>
            <person name="Cooke R."/>
            <person name="Berger C."/>
            <person name="Monfort A."/>
            <person name="Casacuberta E."/>
            <person name="Gibbons T."/>
            <person name="Weber N."/>
            <person name="Vandenbol M."/>
            <person name="Bargues M."/>
            <person name="Terol J."/>
            <person name="Torres A."/>
            <person name="Perez-Perez A."/>
            <person name="Purnelle B."/>
            <person name="Bent E."/>
            <person name="Johnson S."/>
            <person name="Tacon D."/>
            <person name="Jesse T."/>
            <person name="Heijnen L."/>
            <person name="Schwarz S."/>
            <person name="Scholler P."/>
            <person name="Heber S."/>
            <person name="Francs P."/>
            <person name="Bielke C."/>
            <person name="Frishman D."/>
            <person name="Haase D."/>
            <person name="Lemcke K."/>
            <person name="Mewes H.-W."/>
            <person name="Stocker S."/>
            <person name="Zaccaria P."/>
            <person name="Bevan M."/>
            <person name="Wilson R.K."/>
            <person name="de la Bastide M."/>
            <person name="Habermann K."/>
            <person name="Parnell L."/>
            <person name="Dedhia N."/>
            <person name="Gnoj L."/>
            <person name="Schutz K."/>
            <person name="Huang E."/>
            <person name="Spiegel L."/>
            <person name="Sekhon M."/>
            <person name="Murray J."/>
            <person name="Sheet P."/>
            <person name="Cordes M."/>
            <person name="Abu-Threideh J."/>
            <person name="Stoneking T."/>
            <person name="Kalicki J."/>
            <person name="Graves T."/>
            <person name="Harmon G."/>
            <person name="Edwards J."/>
            <person name="Latreille P."/>
            <person name="Courtney L."/>
            <person name="Cloud J."/>
            <person name="Abbott A."/>
            <person name="Scott K."/>
            <person name="Johnson D."/>
            <person name="Minx P."/>
            <person name="Bentley D."/>
            <person name="Fulton B."/>
            <person name="Miller N."/>
            <person name="Greco T."/>
            <person name="Kemp K."/>
            <person name="Kramer J."/>
            <person name="Fulton L."/>
            <person name="Mardis E."/>
            <person name="Dante M."/>
            <person name="Pepin K."/>
            <person name="Hillier L.W."/>
            <person name="Nelson J."/>
            <person name="Spieth J."/>
            <person name="Ryan E."/>
            <person name="Andrews S."/>
            <person name="Geisel C."/>
            <person name="Layman D."/>
            <person name="Du H."/>
            <person name="Ali J."/>
            <person name="Berghoff A."/>
            <person name="Jones K."/>
            <person name="Drone K."/>
            <person name="Cotton M."/>
            <person name="Joshu C."/>
            <person name="Antonoiu B."/>
            <person name="Zidanic M."/>
            <person name="Strong C."/>
            <person name="Sun H."/>
            <person name="Lamar B."/>
            <person name="Yordan C."/>
            <person name="Ma P."/>
            <person name="Zhong J."/>
            <person name="Preston R."/>
            <person name="Vil D."/>
            <person name="Shekher M."/>
            <person name="Matero A."/>
            <person name="Shah R."/>
            <person name="Swaby I.K."/>
            <person name="O'Shaughnessy A."/>
            <person name="Rodriguez M."/>
            <person name="Hoffman J."/>
            <person name="Till S."/>
            <person name="Granat S."/>
            <person name="Shohdy N."/>
            <person name="Hasegawa A."/>
            <person name="Hameed A."/>
            <person name="Lodhi M."/>
            <person name="Johnson A."/>
            <person name="Chen E."/>
            <person name="Marra M.A."/>
            <person name="Martienssen R."/>
            <person name="McCombie W.R."/>
        </authorList>
    </citation>
    <scope>NUCLEOTIDE SEQUENCE [LARGE SCALE GENOMIC DNA]</scope>
    <source>
        <strain>cv. Columbia</strain>
    </source>
</reference>
<reference key="2">
    <citation type="journal article" date="2017" name="Plant J.">
        <title>Araport11: a complete reannotation of the Arabidopsis thaliana reference genome.</title>
        <authorList>
            <person name="Cheng C.Y."/>
            <person name="Krishnakumar V."/>
            <person name="Chan A.P."/>
            <person name="Thibaud-Nissen F."/>
            <person name="Schobel S."/>
            <person name="Town C.D."/>
        </authorList>
    </citation>
    <scope>GENOME REANNOTATION</scope>
    <source>
        <strain>cv. Columbia</strain>
    </source>
</reference>
<reference key="3">
    <citation type="journal article" date="2003" name="Science">
        <title>Empirical analysis of transcriptional activity in the Arabidopsis genome.</title>
        <authorList>
            <person name="Yamada K."/>
            <person name="Lim J."/>
            <person name="Dale J.M."/>
            <person name="Chen H."/>
            <person name="Shinn P."/>
            <person name="Palm C.J."/>
            <person name="Southwick A.M."/>
            <person name="Wu H.C."/>
            <person name="Kim C.J."/>
            <person name="Nguyen M."/>
            <person name="Pham P.K."/>
            <person name="Cheuk R.F."/>
            <person name="Karlin-Newmann G."/>
            <person name="Liu S.X."/>
            <person name="Lam B."/>
            <person name="Sakano H."/>
            <person name="Wu T."/>
            <person name="Yu G."/>
            <person name="Miranda M."/>
            <person name="Quach H.L."/>
            <person name="Tripp M."/>
            <person name="Chang C.H."/>
            <person name="Lee J.M."/>
            <person name="Toriumi M.J."/>
            <person name="Chan M.M."/>
            <person name="Tang C.C."/>
            <person name="Onodera C.S."/>
            <person name="Deng J.M."/>
            <person name="Akiyama K."/>
            <person name="Ansari Y."/>
            <person name="Arakawa T."/>
            <person name="Banh J."/>
            <person name="Banno F."/>
            <person name="Bowser L."/>
            <person name="Brooks S.Y."/>
            <person name="Carninci P."/>
            <person name="Chao Q."/>
            <person name="Choy N."/>
            <person name="Enju A."/>
            <person name="Goldsmith A.D."/>
            <person name="Gurjal M."/>
            <person name="Hansen N.F."/>
            <person name="Hayashizaki Y."/>
            <person name="Johnson-Hopson C."/>
            <person name="Hsuan V.W."/>
            <person name="Iida K."/>
            <person name="Karnes M."/>
            <person name="Khan S."/>
            <person name="Koesema E."/>
            <person name="Ishida J."/>
            <person name="Jiang P.X."/>
            <person name="Jones T."/>
            <person name="Kawai J."/>
            <person name="Kamiya A."/>
            <person name="Meyers C."/>
            <person name="Nakajima M."/>
            <person name="Narusaka M."/>
            <person name="Seki M."/>
            <person name="Sakurai T."/>
            <person name="Satou M."/>
            <person name="Tamse R."/>
            <person name="Vaysberg M."/>
            <person name="Wallender E.K."/>
            <person name="Wong C."/>
            <person name="Yamamura Y."/>
            <person name="Yuan S."/>
            <person name="Shinozaki K."/>
            <person name="Davis R.W."/>
            <person name="Theologis A."/>
            <person name="Ecker J.R."/>
        </authorList>
    </citation>
    <scope>NUCLEOTIDE SEQUENCE [LARGE SCALE MRNA]</scope>
    <source>
        <strain>cv. Columbia</strain>
    </source>
</reference>
<reference key="4">
    <citation type="submission" date="2002-03" db="EMBL/GenBank/DDBJ databases">
        <title>Full-length cDNA from Arabidopsis thaliana.</title>
        <authorList>
            <person name="Brover V.V."/>
            <person name="Troukhan M.E."/>
            <person name="Alexandrov N.A."/>
            <person name="Lu Y.-P."/>
            <person name="Flavell R.B."/>
            <person name="Feldmann K.A."/>
        </authorList>
    </citation>
    <scope>NUCLEOTIDE SEQUENCE [LARGE SCALE MRNA]</scope>
</reference>
<reference key="5">
    <citation type="journal article" date="2005" name="Plant Cell Environ.">
        <title>Multiple iso-proteins of FNR in Arabidopsis: evidence for different contributions to chloroplast function and nitrogen assimilation.</title>
        <authorList>
            <person name="Hanke G.T."/>
            <person name="Okutani S."/>
            <person name="Satomi Y."/>
            <person name="Takao T."/>
            <person name="Suzuki A."/>
            <person name="Hase T."/>
        </authorList>
    </citation>
    <scope>FUNCTION</scope>
    <scope>INDUCTION</scope>
    <scope>TISSUE SPECIFICITY</scope>
    <scope>GENE FAMILY</scope>
    <scope>NOMENCLATURE</scope>
    <source>
        <strain>cv. Columbia</strain>
    </source>
</reference>
<name>FNRR1_ARATH</name>
<comment type="function">
    <text evidence="5">Maintains the supply of reduced ferredoxin under non-photosynthetic conditions.</text>
</comment>
<comment type="catalytic activity">
    <reaction>
        <text>2 reduced [2Fe-2S]-[ferredoxin] + NADP(+) + H(+) = 2 oxidized [2Fe-2S]-[ferredoxin] + NADPH</text>
        <dbReference type="Rhea" id="RHEA:20125"/>
        <dbReference type="Rhea" id="RHEA-COMP:10000"/>
        <dbReference type="Rhea" id="RHEA-COMP:10001"/>
        <dbReference type="ChEBI" id="CHEBI:15378"/>
        <dbReference type="ChEBI" id="CHEBI:33737"/>
        <dbReference type="ChEBI" id="CHEBI:33738"/>
        <dbReference type="ChEBI" id="CHEBI:57783"/>
        <dbReference type="ChEBI" id="CHEBI:58349"/>
        <dbReference type="EC" id="1.18.1.2"/>
    </reaction>
</comment>
<comment type="cofactor">
    <cofactor>
        <name>FAD</name>
        <dbReference type="ChEBI" id="CHEBI:57692"/>
    </cofactor>
</comment>
<comment type="subcellular location">
    <subcellularLocation>
        <location evidence="6">Plastid</location>
        <location evidence="6">Chloroplast</location>
    </subcellularLocation>
</comment>
<comment type="alternative products">
    <event type="alternative splicing"/>
    <isoform>
        <id>Q9M0V6-1</id>
        <name>1</name>
        <sequence type="displayed"/>
    </isoform>
    <text>A number of isoforms are produced. According to EST sequences.</text>
</comment>
<comment type="tissue specificity">
    <text evidence="5">Expressed in shoots and roots. Less abundant in roots than RFNR2.</text>
</comment>
<comment type="induction">
    <text evidence="5">Up-regulated by nitrate in roots while down-regulated in shoots.</text>
</comment>
<comment type="similarity">
    <text evidence="6">Belongs to the ferredoxin--NADP reductase type 1 family.</text>
</comment>
<comment type="sequence caution" evidence="6">
    <conflict type="erroneous gene model prediction">
        <sequence resource="EMBL-CDS" id="CAB81081"/>
    </conflict>
</comment>
<accession>Q9M0V6</accession>
<accession>Q8L7D9</accession>
<accession>Q8LBD8</accession>
<accession>Q8VY95</accession>